<accession>Q9S7U9</accession>
<accession>O80395</accession>
<keyword id="KW-0025">Alternative splicing</keyword>
<keyword id="KW-0067">ATP-binding</keyword>
<keyword id="KW-0391">Immunity</keyword>
<keyword id="KW-0399">Innate immunity</keyword>
<keyword id="KW-0418">Kinase</keyword>
<keyword id="KW-0547">Nucleotide-binding</keyword>
<keyword id="KW-0597">Phosphoprotein</keyword>
<keyword id="KW-0611">Plant defense</keyword>
<keyword id="KW-1185">Reference proteome</keyword>
<keyword id="KW-0723">Serine/threonine-protein kinase</keyword>
<keyword id="KW-0346">Stress response</keyword>
<keyword id="KW-0808">Transferase</keyword>
<gene>
    <name type="primary">MKK2</name>
    <name type="synonym">MAP2K</name>
    <name type="synonym">MK1</name>
    <name type="ordered locus">At4g29810</name>
    <name type="ORF">F27B13.50</name>
</gene>
<proteinExistence type="evidence at protein level"/>
<organism>
    <name type="scientific">Arabidopsis thaliana</name>
    <name type="common">Mouse-ear cress</name>
    <dbReference type="NCBI Taxonomy" id="3702"/>
    <lineage>
        <taxon>Eukaryota</taxon>
        <taxon>Viridiplantae</taxon>
        <taxon>Streptophyta</taxon>
        <taxon>Embryophyta</taxon>
        <taxon>Tracheophyta</taxon>
        <taxon>Spermatophyta</taxon>
        <taxon>Magnoliopsida</taxon>
        <taxon>eudicotyledons</taxon>
        <taxon>Gunneridae</taxon>
        <taxon>Pentapetalae</taxon>
        <taxon>rosids</taxon>
        <taxon>malvids</taxon>
        <taxon>Brassicales</taxon>
        <taxon>Brassicaceae</taxon>
        <taxon>Camelineae</taxon>
        <taxon>Arabidopsis</taxon>
    </lineage>
</organism>
<feature type="chain" id="PRO_0000245822" description="Mitogen-activated protein kinase kinase 2">
    <location>
        <begin position="1"/>
        <end position="363"/>
    </location>
</feature>
<feature type="domain" description="Protein kinase" evidence="2">
    <location>
        <begin position="70"/>
        <end position="330"/>
    </location>
</feature>
<feature type="active site" description="Proton acceptor" evidence="2 3">
    <location>
        <position position="192"/>
    </location>
</feature>
<feature type="binding site" evidence="2">
    <location>
        <begin position="76"/>
        <end position="84"/>
    </location>
    <ligand>
        <name>ATP</name>
        <dbReference type="ChEBI" id="CHEBI:30616"/>
    </ligand>
</feature>
<feature type="binding site" evidence="2">
    <location>
        <position position="99"/>
    </location>
    <ligand>
        <name>ATP</name>
        <dbReference type="ChEBI" id="CHEBI:30616"/>
    </ligand>
</feature>
<feature type="modified residue" description="Phosphoserine" evidence="14">
    <location>
        <position position="56"/>
    </location>
</feature>
<feature type="modified residue" description="Phosphothreonine" evidence="4 5 12">
    <location>
        <position position="220"/>
    </location>
</feature>
<feature type="modified residue" description="Phosphothreonine" evidence="4 5 12">
    <location>
        <position position="226"/>
    </location>
</feature>
<feature type="modified residue" description="Phosphothreonine" evidence="1">
    <location>
        <position position="230"/>
    </location>
</feature>
<feature type="splice variant" id="VSP_019784" description="In isoform 2." evidence="13">
    <original>L</original>
    <variation>LRKGFGSLCR</variation>
    <location>
        <position position="26"/>
    </location>
</feature>
<feature type="mutagenesis site" description="Loss of interaction with MEKK1. Phosphorylated by MAPKKK5." evidence="11 12">
    <original>K</original>
    <variation>R</variation>
    <location>
        <position position="99"/>
    </location>
</feature>
<feature type="mutagenesis site" description="Loss of interaction with MEKK1. Normal phosphorylation by MAPKKK5; when associated with A-226." evidence="4 5 11 12">
    <original>T</original>
    <variation>A</variation>
    <location>
        <position position="220"/>
    </location>
</feature>
<feature type="mutagenesis site" description="Constitutively active; when associated with E-226." evidence="4 5 12">
    <original>T</original>
    <variation>E</variation>
    <location>
        <position position="220"/>
    </location>
</feature>
<feature type="mutagenesis site" description="Loss of interaction with MEKK1. Normal phosphorylation by MAPKKK5; when associated with A-220." evidence="4 5 11 12">
    <original>T</original>
    <variation>A</variation>
    <location>
        <position position="226"/>
    </location>
</feature>
<feature type="mutagenesis site" description="Constitutively active; when associated with E-220." evidence="4 5 12">
    <original>T</original>
    <variation>E</variation>
    <location>
        <position position="226"/>
    </location>
</feature>
<feature type="sequence conflict" description="In Ref. 2; CAA07281 and 3; AAC72754." evidence="13" ref="2 3">
    <original>D</original>
    <variation>E</variation>
    <location>
        <position position="314"/>
    </location>
</feature>
<reference key="1">
    <citation type="journal article" date="1998" name="Biochem. Biophys. Res. Commun.">
        <title>Isolation of ATMEKK1 (a MAP kinase kinase kinase)-interacting proteins and analysis of a MAP kinase cascade in Arabidopsis.</title>
        <authorList>
            <person name="Ichimura K."/>
            <person name="Mizoguchi T."/>
            <person name="Irie K."/>
            <person name="Morris P.C."/>
            <person name="Giraudat J."/>
            <person name="Matsumoto K."/>
            <person name="Shinozaki K."/>
        </authorList>
    </citation>
    <scope>NUCLEOTIDE SEQUENCE [MRNA] (ISOFORM 1)</scope>
    <scope>SUBUNIT</scope>
    <scope>TISSUE SPECIFICITY</scope>
    <scope>INTERACTION WITH MEKK1 AND MPK4</scope>
    <scope>MUTAGENESIS OF LYS-99; THR-220 AND THR-226</scope>
    <scope>PHOSPHORYLATION AT THR-220 AND THR-226</scope>
    <source>
        <strain>cv. Columbia</strain>
    </source>
</reference>
<reference key="2">
    <citation type="journal article" date="1999" name="Plant Sci.">
        <title>Molecular characterization and expression of an Arabidopsis thaliana L. MAP kinase kinase cDNA AtMAP2Kalpha.</title>
        <authorList>
            <person name="Hamal A."/>
            <person name="Jouannic S."/>
            <person name="Leprince A.-S."/>
            <person name="Kreis M."/>
            <person name="Henry Y."/>
        </authorList>
    </citation>
    <scope>NUCLEOTIDE SEQUENCE [MRNA] (ISOFORM 1)</scope>
    <source>
        <strain>cv. Columbia</strain>
        <tissue>Root</tissue>
    </source>
</reference>
<reference key="3">
    <citation type="submission" date="1998-05" db="EMBL/GenBank/DDBJ databases">
        <title>AMK1, a MAP kinase kinase from Arabidopsis thaliana is a functional homolog of PBS2, the MAPKK of the osmolarity pathway in yeast Saccharomyces cerevisiae.</title>
        <authorList>
            <person name="Sherman A."/>
            <person name="Fink G.R."/>
        </authorList>
    </citation>
    <scope>NUCLEOTIDE SEQUENCE [MRNA] (ISOFORM 1)</scope>
    <source>
        <strain>cv. Columbia</strain>
    </source>
</reference>
<reference key="4">
    <citation type="journal article" date="1999" name="Nature">
        <title>Sequence and analysis of chromosome 4 of the plant Arabidopsis thaliana.</title>
        <authorList>
            <person name="Mayer K.F.X."/>
            <person name="Schueller C."/>
            <person name="Wambutt R."/>
            <person name="Murphy G."/>
            <person name="Volckaert G."/>
            <person name="Pohl T."/>
            <person name="Duesterhoeft A."/>
            <person name="Stiekema W."/>
            <person name="Entian K.-D."/>
            <person name="Terryn N."/>
            <person name="Harris B."/>
            <person name="Ansorge W."/>
            <person name="Brandt P."/>
            <person name="Grivell L.A."/>
            <person name="Rieger M."/>
            <person name="Weichselgartner M."/>
            <person name="de Simone V."/>
            <person name="Obermaier B."/>
            <person name="Mache R."/>
            <person name="Mueller M."/>
            <person name="Kreis M."/>
            <person name="Delseny M."/>
            <person name="Puigdomenech P."/>
            <person name="Watson M."/>
            <person name="Schmidtheini T."/>
            <person name="Reichert B."/>
            <person name="Portetelle D."/>
            <person name="Perez-Alonso M."/>
            <person name="Boutry M."/>
            <person name="Bancroft I."/>
            <person name="Vos P."/>
            <person name="Hoheisel J."/>
            <person name="Zimmermann W."/>
            <person name="Wedler H."/>
            <person name="Ridley P."/>
            <person name="Langham S.-A."/>
            <person name="McCullagh B."/>
            <person name="Bilham L."/>
            <person name="Robben J."/>
            <person name="van der Schueren J."/>
            <person name="Grymonprez B."/>
            <person name="Chuang Y.-J."/>
            <person name="Vandenbussche F."/>
            <person name="Braeken M."/>
            <person name="Weltjens I."/>
            <person name="Voet M."/>
            <person name="Bastiaens I."/>
            <person name="Aert R."/>
            <person name="Defoor E."/>
            <person name="Weitzenegger T."/>
            <person name="Bothe G."/>
            <person name="Ramsperger U."/>
            <person name="Hilbert H."/>
            <person name="Braun M."/>
            <person name="Holzer E."/>
            <person name="Brandt A."/>
            <person name="Peters S."/>
            <person name="van Staveren M."/>
            <person name="Dirkse W."/>
            <person name="Mooijman P."/>
            <person name="Klein Lankhorst R."/>
            <person name="Rose M."/>
            <person name="Hauf J."/>
            <person name="Koetter P."/>
            <person name="Berneiser S."/>
            <person name="Hempel S."/>
            <person name="Feldpausch M."/>
            <person name="Lamberth S."/>
            <person name="Van den Daele H."/>
            <person name="De Keyser A."/>
            <person name="Buysshaert C."/>
            <person name="Gielen J."/>
            <person name="Villarroel R."/>
            <person name="De Clercq R."/>
            <person name="van Montagu M."/>
            <person name="Rogers J."/>
            <person name="Cronin A."/>
            <person name="Quail M.A."/>
            <person name="Bray-Allen S."/>
            <person name="Clark L."/>
            <person name="Doggett J."/>
            <person name="Hall S."/>
            <person name="Kay M."/>
            <person name="Lennard N."/>
            <person name="McLay K."/>
            <person name="Mayes R."/>
            <person name="Pettett A."/>
            <person name="Rajandream M.A."/>
            <person name="Lyne M."/>
            <person name="Benes V."/>
            <person name="Rechmann S."/>
            <person name="Borkova D."/>
            <person name="Bloecker H."/>
            <person name="Scharfe M."/>
            <person name="Grimm M."/>
            <person name="Loehnert T.-H."/>
            <person name="Dose S."/>
            <person name="de Haan M."/>
            <person name="Maarse A.C."/>
            <person name="Schaefer M."/>
            <person name="Mueller-Auer S."/>
            <person name="Gabel C."/>
            <person name="Fuchs M."/>
            <person name="Fartmann B."/>
            <person name="Granderath K."/>
            <person name="Dauner D."/>
            <person name="Herzl A."/>
            <person name="Neumann S."/>
            <person name="Argiriou A."/>
            <person name="Vitale D."/>
            <person name="Liguori R."/>
            <person name="Piravandi E."/>
            <person name="Massenet O."/>
            <person name="Quigley F."/>
            <person name="Clabauld G."/>
            <person name="Muendlein A."/>
            <person name="Felber R."/>
            <person name="Schnabl S."/>
            <person name="Hiller R."/>
            <person name="Schmidt W."/>
            <person name="Lecharny A."/>
            <person name="Aubourg S."/>
            <person name="Chefdor F."/>
            <person name="Cooke R."/>
            <person name="Berger C."/>
            <person name="Monfort A."/>
            <person name="Casacuberta E."/>
            <person name="Gibbons T."/>
            <person name="Weber N."/>
            <person name="Vandenbol M."/>
            <person name="Bargues M."/>
            <person name="Terol J."/>
            <person name="Torres A."/>
            <person name="Perez-Perez A."/>
            <person name="Purnelle B."/>
            <person name="Bent E."/>
            <person name="Johnson S."/>
            <person name="Tacon D."/>
            <person name="Jesse T."/>
            <person name="Heijnen L."/>
            <person name="Schwarz S."/>
            <person name="Scholler P."/>
            <person name="Heber S."/>
            <person name="Francs P."/>
            <person name="Bielke C."/>
            <person name="Frishman D."/>
            <person name="Haase D."/>
            <person name="Lemcke K."/>
            <person name="Mewes H.-W."/>
            <person name="Stocker S."/>
            <person name="Zaccaria P."/>
            <person name="Bevan M."/>
            <person name="Wilson R.K."/>
            <person name="de la Bastide M."/>
            <person name="Habermann K."/>
            <person name="Parnell L."/>
            <person name="Dedhia N."/>
            <person name="Gnoj L."/>
            <person name="Schutz K."/>
            <person name="Huang E."/>
            <person name="Spiegel L."/>
            <person name="Sekhon M."/>
            <person name="Murray J."/>
            <person name="Sheet P."/>
            <person name="Cordes M."/>
            <person name="Abu-Threideh J."/>
            <person name="Stoneking T."/>
            <person name="Kalicki J."/>
            <person name="Graves T."/>
            <person name="Harmon G."/>
            <person name="Edwards J."/>
            <person name="Latreille P."/>
            <person name="Courtney L."/>
            <person name="Cloud J."/>
            <person name="Abbott A."/>
            <person name="Scott K."/>
            <person name="Johnson D."/>
            <person name="Minx P."/>
            <person name="Bentley D."/>
            <person name="Fulton B."/>
            <person name="Miller N."/>
            <person name="Greco T."/>
            <person name="Kemp K."/>
            <person name="Kramer J."/>
            <person name="Fulton L."/>
            <person name="Mardis E."/>
            <person name="Dante M."/>
            <person name="Pepin K."/>
            <person name="Hillier L.W."/>
            <person name="Nelson J."/>
            <person name="Spieth J."/>
            <person name="Ryan E."/>
            <person name="Andrews S."/>
            <person name="Geisel C."/>
            <person name="Layman D."/>
            <person name="Du H."/>
            <person name="Ali J."/>
            <person name="Berghoff A."/>
            <person name="Jones K."/>
            <person name="Drone K."/>
            <person name="Cotton M."/>
            <person name="Joshu C."/>
            <person name="Antonoiu B."/>
            <person name="Zidanic M."/>
            <person name="Strong C."/>
            <person name="Sun H."/>
            <person name="Lamar B."/>
            <person name="Yordan C."/>
            <person name="Ma P."/>
            <person name="Zhong J."/>
            <person name="Preston R."/>
            <person name="Vil D."/>
            <person name="Shekher M."/>
            <person name="Matero A."/>
            <person name="Shah R."/>
            <person name="Swaby I.K."/>
            <person name="O'Shaughnessy A."/>
            <person name="Rodriguez M."/>
            <person name="Hoffman J."/>
            <person name="Till S."/>
            <person name="Granat S."/>
            <person name="Shohdy N."/>
            <person name="Hasegawa A."/>
            <person name="Hameed A."/>
            <person name="Lodhi M."/>
            <person name="Johnson A."/>
            <person name="Chen E."/>
            <person name="Marra M.A."/>
            <person name="Martienssen R."/>
            <person name="McCombie W.R."/>
        </authorList>
    </citation>
    <scope>NUCLEOTIDE SEQUENCE [LARGE SCALE GENOMIC DNA]</scope>
    <source>
        <strain>cv. Columbia</strain>
    </source>
</reference>
<reference key="5">
    <citation type="journal article" date="2017" name="Plant J.">
        <title>Araport11: a complete reannotation of the Arabidopsis thaliana reference genome.</title>
        <authorList>
            <person name="Cheng C.Y."/>
            <person name="Krishnakumar V."/>
            <person name="Chan A.P."/>
            <person name="Thibaud-Nissen F."/>
            <person name="Schobel S."/>
            <person name="Town C.D."/>
        </authorList>
    </citation>
    <scope>GENOME REANNOTATION</scope>
    <source>
        <strain>cv. Columbia</strain>
    </source>
</reference>
<reference key="6">
    <citation type="journal article" date="2003" name="Science">
        <title>Empirical analysis of transcriptional activity in the Arabidopsis genome.</title>
        <authorList>
            <person name="Yamada K."/>
            <person name="Lim J."/>
            <person name="Dale J.M."/>
            <person name="Chen H."/>
            <person name="Shinn P."/>
            <person name="Palm C.J."/>
            <person name="Southwick A.M."/>
            <person name="Wu H.C."/>
            <person name="Kim C.J."/>
            <person name="Nguyen M."/>
            <person name="Pham P.K."/>
            <person name="Cheuk R.F."/>
            <person name="Karlin-Newmann G."/>
            <person name="Liu S.X."/>
            <person name="Lam B."/>
            <person name="Sakano H."/>
            <person name="Wu T."/>
            <person name="Yu G."/>
            <person name="Miranda M."/>
            <person name="Quach H.L."/>
            <person name="Tripp M."/>
            <person name="Chang C.H."/>
            <person name="Lee J.M."/>
            <person name="Toriumi M.J."/>
            <person name="Chan M.M."/>
            <person name="Tang C.C."/>
            <person name="Onodera C.S."/>
            <person name="Deng J.M."/>
            <person name="Akiyama K."/>
            <person name="Ansari Y."/>
            <person name="Arakawa T."/>
            <person name="Banh J."/>
            <person name="Banno F."/>
            <person name="Bowser L."/>
            <person name="Brooks S.Y."/>
            <person name="Carninci P."/>
            <person name="Chao Q."/>
            <person name="Choy N."/>
            <person name="Enju A."/>
            <person name="Goldsmith A.D."/>
            <person name="Gurjal M."/>
            <person name="Hansen N.F."/>
            <person name="Hayashizaki Y."/>
            <person name="Johnson-Hopson C."/>
            <person name="Hsuan V.W."/>
            <person name="Iida K."/>
            <person name="Karnes M."/>
            <person name="Khan S."/>
            <person name="Koesema E."/>
            <person name="Ishida J."/>
            <person name="Jiang P.X."/>
            <person name="Jones T."/>
            <person name="Kawai J."/>
            <person name="Kamiya A."/>
            <person name="Meyers C."/>
            <person name="Nakajima M."/>
            <person name="Narusaka M."/>
            <person name="Seki M."/>
            <person name="Sakurai T."/>
            <person name="Satou M."/>
            <person name="Tamse R."/>
            <person name="Vaysberg M."/>
            <person name="Wallender E.K."/>
            <person name="Wong C."/>
            <person name="Yamamura Y."/>
            <person name="Yuan S."/>
            <person name="Shinozaki K."/>
            <person name="Davis R.W."/>
            <person name="Theologis A."/>
            <person name="Ecker J.R."/>
        </authorList>
    </citation>
    <scope>NUCLEOTIDE SEQUENCE [LARGE SCALE MRNA] (ISOFORM 1)</scope>
    <source>
        <strain>cv. Columbia</strain>
    </source>
</reference>
<reference key="7">
    <citation type="journal article" date="2002" name="Nature">
        <title>MAP kinase signalling cascade in Arabidopsis innate immunity.</title>
        <authorList>
            <person name="Asai T."/>
            <person name="Tena G."/>
            <person name="Plotnikova J."/>
            <person name="Willmann M.R."/>
            <person name="Chiu W.-L."/>
            <person name="Gomez-Gomez L."/>
            <person name="Boller T."/>
            <person name="Ausubel F.M."/>
            <person name="Sheen J."/>
        </authorList>
    </citation>
    <scope>PHOSPHORYLATION AT THR-220 AND THR-226</scope>
    <scope>MUTAGENESIS OF THR-220 AND THR-226</scope>
</reference>
<reference key="8">
    <citation type="journal article" date="2002" name="Trends Plant Sci.">
        <title>Mitogen-activated protein kinase cascades in plants: a new nomenclature.</title>
        <authorList>
            <consortium name="MAPK group"/>
        </authorList>
    </citation>
    <scope>GENE FAMILY</scope>
    <scope>NOMENCLATURE</scope>
</reference>
<reference key="9">
    <citation type="journal article" date="2004" name="Mol. Cell">
        <title>The MKK2 pathway mediates cold and salt stress signaling in Arabidopsis.</title>
        <authorList>
            <person name="Teige M."/>
            <person name="Scheikl E."/>
            <person name="Eulgem T."/>
            <person name="Doczi R."/>
            <person name="Ichimura K."/>
            <person name="Shinozaki K."/>
            <person name="Dangl J.L."/>
            <person name="Hirt H."/>
        </authorList>
    </citation>
    <scope>FUNCTION</scope>
    <scope>CATALYTIC ACTIVITY</scope>
    <scope>ACTIVITY REGULATION</scope>
    <scope>INTERACTION WITH MPK4 AND MPK6</scope>
    <scope>PHOSPHORYLATION AT THR-220 AND THR-226</scope>
    <scope>MUTAGENESIS OF THR-220 AND THR-226</scope>
</reference>
<reference key="10">
    <citation type="journal article" date="2006" name="Trends Plant Sci.">
        <title>Ancient signals: comparative genomics of plant MAPK and MAPKK gene families.</title>
        <authorList>
            <person name="Hamel L.P."/>
            <person name="Nicole M.C."/>
            <person name="Sritubtim S."/>
            <person name="Morency M.J."/>
            <person name="Ellis M."/>
            <person name="Ehlting J."/>
            <person name="Beaudoin N."/>
            <person name="Barbazuk B."/>
            <person name="Klessig D."/>
            <person name="Lee J."/>
            <person name="Martin G."/>
            <person name="Mundy J."/>
            <person name="Ohashi Y."/>
            <person name="Scheel D."/>
            <person name="Sheen J."/>
            <person name="Xing T."/>
            <person name="Zhang S."/>
            <person name="Seguin A."/>
            <person name="Ellis B.E."/>
        </authorList>
    </citation>
    <scope>GENE FAMILY</scope>
</reference>
<reference key="11">
    <citation type="journal article" date="2007" name="Mol. Plant Microbe Interact.">
        <title>The MAP kinase kinase MKK2 affects disease resistance in Arabidopsis.</title>
        <authorList>
            <person name="Brader G."/>
            <person name="Djamei A."/>
            <person name="Teige M."/>
            <person name="Palva E.T."/>
            <person name="Hirt H."/>
        </authorList>
    </citation>
    <scope>FUNCTION</scope>
    <scope>DISRUPTION PHENOTYPE</scope>
</reference>
<reference key="12">
    <citation type="journal article" date="2008" name="Cell Res.">
        <title>MEKK1, MKK1/MKK2 and MPK4 function together in a mitogen-activated protein kinase cascade to regulate innate immunity in plants.</title>
        <authorList>
            <person name="Gao M."/>
            <person name="Liu J."/>
            <person name="Bi D."/>
            <person name="Zhang Z."/>
            <person name="Cheng F."/>
            <person name="Chen S."/>
            <person name="Zhang Y."/>
        </authorList>
    </citation>
    <scope>FUNCTION</scope>
    <scope>INTERACTION WITH MEKK1 AND MPK4</scope>
    <scope>DISRUPTION PHENOTYPE</scope>
</reference>
<reference key="13">
    <citation type="journal article" date="2008" name="Plant Physiol.">
        <title>Arabidopsis mitogen-activated protein kinase kinases MKK1 and MKK2 have overlapping functions in defense signaling mediated by MEKK1, MPK4, and MKS1.</title>
        <authorList>
            <person name="Qiu J.L."/>
            <person name="Zhou L."/>
            <person name="Yun B.W."/>
            <person name="Nielsen H.B."/>
            <person name="Fiil B.K."/>
            <person name="Petersen K."/>
            <person name="Mackinlay J."/>
            <person name="Loake G.J."/>
            <person name="Mundy J."/>
            <person name="Morris P.C."/>
        </authorList>
    </citation>
    <scope>FUNCTION</scope>
    <scope>DISRUPTION PHENOTYPE</scope>
</reference>
<reference key="14">
    <citation type="journal article" date="2008" name="Plant Signal. Behav.">
        <title>Comprehensive analysis of protein-protein interactions between Arabidopsis MAPKs and MAPK kinases helps define potential MAPK signalling modules.</title>
        <authorList>
            <person name="Lee J.S."/>
            <person name="Huh K.W."/>
            <person name="Bhargava A."/>
            <person name="Ellis B.E."/>
        </authorList>
    </citation>
    <scope>INTERACTION WITH MPK4; MPK6; MPK10 AND MPK11</scope>
</reference>
<reference key="15">
    <citation type="journal article" date="2009" name="Plant Physiol.">
        <title>Large-scale Arabidopsis phosphoproteome profiling reveals novel chloroplast kinase substrates and phosphorylation networks.</title>
        <authorList>
            <person name="Reiland S."/>
            <person name="Messerli G."/>
            <person name="Baerenfaller K."/>
            <person name="Gerrits B."/>
            <person name="Endler A."/>
            <person name="Grossmann J."/>
            <person name="Gruissem W."/>
            <person name="Baginsky S."/>
        </authorList>
    </citation>
    <scope>PHOSPHORYLATION [LARGE SCALE ANALYSIS] AT SER-56</scope>
    <scope>IDENTIFICATION BY MASS SPECTROMETRY [LARGE SCALE ANALYSIS]</scope>
</reference>
<reference key="16">
    <citation type="journal article" date="2013" name="J. Plant Res.">
        <title>Phosphorylation of Arabidopsis thaliana MEKK1 via Ca(2+) signaling as a part of the cold stress response.</title>
        <authorList>
            <person name="Furuya T."/>
            <person name="Matsuoka D."/>
            <person name="Nanmori T."/>
        </authorList>
    </citation>
    <scope>ACTIVITY REGULATION</scope>
    <scope>PHOSPHORYLATION</scope>
    <source>
        <strain>cv. Columbia</strain>
    </source>
</reference>
<reference key="17">
    <citation type="journal article" date="2016" name="EMBO J.">
        <title>The Arabidopsis CERK1-associated kinase PBL27 connects chitin perception to MAPK activation.</title>
        <authorList>
            <person name="Yamada K."/>
            <person name="Yamaguchi K."/>
            <person name="Shirakawa T."/>
            <person name="Nakagami H."/>
            <person name="Mine A."/>
            <person name="Ishikawa K."/>
            <person name="Fujiwara M."/>
            <person name="Narusaka M."/>
            <person name="Narusaka Y."/>
            <person name="Ichimura K."/>
            <person name="Kobayashi Y."/>
            <person name="Matsui H."/>
            <person name="Nomura Y."/>
            <person name="Nomoto M."/>
            <person name="Tada Y."/>
            <person name="Fukao Y."/>
            <person name="Fukamizo T."/>
            <person name="Tsuda K."/>
            <person name="Shirasu K."/>
            <person name="Shibuya N."/>
            <person name="Kawasaki T."/>
        </authorList>
    </citation>
    <scope>INTERACTION WITH MAPKKK5</scope>
    <scope>PHOSPHORYLATION BY MAPKKK5</scope>
    <scope>MUTAGENESIS OF LYS-99; THR-220 AND THR-226</scope>
    <source>
        <strain>cv. Columbia</strain>
    </source>
</reference>
<sequence length="363" mass="39848">MKKGGFSNNLKLAIPVAGEQSITKFLTQSGTFKDGDLRVNKDGVRIISQLEPEVLSPIKPADDQLSLSDLDMVKVIGKGSSGVVQLVQHKWTGQFFALKVIQLNIDEAIRKAIAQELKINQSSQCPNLVTSYQSFYDNGAISLILEYMDGGSLADFLKSVKAIPDSYLSAIFRQVLQGLIYLHHDRHIIHRDLKPSNLLINHRGEVKITDFGVSTVMTNTAGLANTFVGTYNYMSPERIVGNKYGNKSDIWSLGLVVLECATGKFPYAPPNQEETWTSVFELMEAIVDQPPPALPSGNFSPELSSFISTCLQKDPNSRSSAKELMEHPFLNKYDYSGINLASYFTDAGSPLATLGNLSGTFSV</sequence>
<evidence type="ECO:0000250" key="1">
    <source>
        <dbReference type="UniProtKB" id="O80397"/>
    </source>
</evidence>
<evidence type="ECO:0000255" key="2">
    <source>
        <dbReference type="PROSITE-ProRule" id="PRU00159"/>
    </source>
</evidence>
<evidence type="ECO:0000255" key="3">
    <source>
        <dbReference type="PROSITE-ProRule" id="PRU10027"/>
    </source>
</evidence>
<evidence type="ECO:0000269" key="4">
    <source>
    </source>
</evidence>
<evidence type="ECO:0000269" key="5">
    <source>
    </source>
</evidence>
<evidence type="ECO:0000269" key="6">
    <source>
    </source>
</evidence>
<evidence type="ECO:0000269" key="7">
    <source>
    </source>
</evidence>
<evidence type="ECO:0000269" key="8">
    <source>
    </source>
</evidence>
<evidence type="ECO:0000269" key="9">
    <source>
    </source>
</evidence>
<evidence type="ECO:0000269" key="10">
    <source>
    </source>
</evidence>
<evidence type="ECO:0000269" key="11">
    <source>
    </source>
</evidence>
<evidence type="ECO:0000269" key="12">
    <source>
    </source>
</evidence>
<evidence type="ECO:0000305" key="13"/>
<evidence type="ECO:0007744" key="14">
    <source>
    </source>
</evidence>
<protein>
    <recommendedName>
        <fullName>Mitogen-activated protein kinase kinase 2</fullName>
        <shortName>AtMAP2Kbeta</shortName>
        <shortName>AtMKK2</shortName>
        <shortName>MAP kinase kinase 2</shortName>
        <ecNumber evidence="5">2.7.12.2</ecNumber>
    </recommendedName>
</protein>
<comment type="function">
    <text evidence="5 6 7 8">MEKK1, MKK1/MKK2 and MPK4 function in a signaling pathway that modulates the expression of genes responding to biotic and abiotic stresses and also plays an important role in pathogen defense by negatively regulating innate immunity. Plays a role in abiotic stress tolerance and plant disease resistance through activation of MPK4 and MPK6 by phosphorylation. Acts redundantly with MKK1.</text>
</comment>
<comment type="catalytic activity">
    <reaction evidence="5">
        <text>L-seryl-[protein] + ATP = O-phospho-L-seryl-[protein] + ADP + H(+)</text>
        <dbReference type="Rhea" id="RHEA:17989"/>
        <dbReference type="Rhea" id="RHEA-COMP:9863"/>
        <dbReference type="Rhea" id="RHEA-COMP:11604"/>
        <dbReference type="ChEBI" id="CHEBI:15378"/>
        <dbReference type="ChEBI" id="CHEBI:29999"/>
        <dbReference type="ChEBI" id="CHEBI:30616"/>
        <dbReference type="ChEBI" id="CHEBI:83421"/>
        <dbReference type="ChEBI" id="CHEBI:456216"/>
        <dbReference type="EC" id="2.7.12.2"/>
    </reaction>
</comment>
<comment type="catalytic activity">
    <reaction evidence="5">
        <text>L-threonyl-[protein] + ATP = O-phospho-L-threonyl-[protein] + ADP + H(+)</text>
        <dbReference type="Rhea" id="RHEA:46608"/>
        <dbReference type="Rhea" id="RHEA-COMP:11060"/>
        <dbReference type="Rhea" id="RHEA-COMP:11605"/>
        <dbReference type="ChEBI" id="CHEBI:15378"/>
        <dbReference type="ChEBI" id="CHEBI:30013"/>
        <dbReference type="ChEBI" id="CHEBI:30616"/>
        <dbReference type="ChEBI" id="CHEBI:61977"/>
        <dbReference type="ChEBI" id="CHEBI:456216"/>
        <dbReference type="EC" id="2.7.12.2"/>
    </reaction>
</comment>
<comment type="catalytic activity">
    <reaction evidence="5">
        <text>L-tyrosyl-[protein] + ATP = O-phospho-L-tyrosyl-[protein] + ADP + H(+)</text>
        <dbReference type="Rhea" id="RHEA:10596"/>
        <dbReference type="Rhea" id="RHEA-COMP:10136"/>
        <dbReference type="Rhea" id="RHEA-COMP:20101"/>
        <dbReference type="ChEBI" id="CHEBI:15378"/>
        <dbReference type="ChEBI" id="CHEBI:30616"/>
        <dbReference type="ChEBI" id="CHEBI:46858"/>
        <dbReference type="ChEBI" id="CHEBI:61978"/>
        <dbReference type="ChEBI" id="CHEBI:456216"/>
        <dbReference type="EC" id="2.7.12.2"/>
    </reaction>
</comment>
<comment type="activity regulation">
    <text evidence="5 10">Activated in response to cold and salt stresses through serine and threonine phosphorylation by MEKK1.</text>
</comment>
<comment type="subunit">
    <text evidence="5 8 9 11 12">Interacts with MEKK1, MPK4 and MPK6. May form a ternary complex composed of MEKK1 and MKK1/MKK2 and MPK4. Interacts with MPK10 and MPK11. Interacts with MAPKKK5 mainly in the cytosol (PubMed:27679653).</text>
</comment>
<comment type="interaction">
    <interactant intactId="EBI-994350">
        <id>Q9S7U9</id>
    </interactant>
    <interactant intactId="EBI-25512586">
        <id>A0A178UNT9</id>
        <label>At5g58950</label>
    </interactant>
    <organismsDiffer>false</organismsDiffer>
    <experiments>5</experiments>
</comment>
<comment type="interaction">
    <interactant intactId="EBI-994350">
        <id>Q9S7U9</id>
    </interactant>
    <interactant intactId="EBI-25512239">
        <id>Q9ZR37</id>
        <label>DSPTP1</label>
    </interactant>
    <organismsDiffer>false</organismsDiffer>
    <experiments>5</experiments>
</comment>
<comment type="interaction">
    <interactant intactId="EBI-994350">
        <id>Q9S7U9</id>
    </interactant>
    <interactant intactId="EBI-2358527">
        <id>Q9M1Z5</id>
        <label>MPK10</label>
    </interactant>
    <organismsDiffer>false</organismsDiffer>
    <experiments>2</experiments>
</comment>
<comment type="interaction">
    <interactant intactId="EBI-994350">
        <id>Q9S7U9</id>
    </interactant>
    <interactant intactId="EBI-2358699">
        <id>Q9LMM5</id>
        <label>MPK11</label>
    </interactant>
    <organismsDiffer>false</organismsDiffer>
    <experiments>2</experiments>
</comment>
<comment type="interaction">
    <interactant intactId="EBI-994350">
        <id>Q9S7U9</id>
    </interactant>
    <interactant intactId="EBI-2358762">
        <id>Q9LQQ9</id>
        <label>MPK13</label>
    </interactant>
    <organismsDiffer>false</organismsDiffer>
    <experiments>2</experiments>
</comment>
<comment type="interaction">
    <interactant intactId="EBI-994350">
        <id>Q9S7U9</id>
    </interactant>
    <interactant intactId="EBI-994375">
        <id>Q39024</id>
        <label>MPK4</label>
    </interactant>
    <organismsDiffer>false</organismsDiffer>
    <experiments>10</experiments>
</comment>
<comment type="interaction">
    <interactant intactId="EBI-994350">
        <id>Q9S7U9</id>
    </interactant>
    <interactant intactId="EBI-349548">
        <id>Q39026</id>
        <label>MPK6</label>
    </interactant>
    <organismsDiffer>false</organismsDiffer>
    <experiments>8</experiments>
</comment>
<comment type="interaction">
    <interactant intactId="EBI-994350">
        <id>Q9S7U9</id>
    </interactant>
    <interactant intactId="EBI-15192297">
        <id>Q9LQF0</id>
        <label>TCP23</label>
    </interactant>
    <organismsDiffer>false</organismsDiffer>
    <experiments>3</experiments>
</comment>
<comment type="alternative products">
    <event type="alternative splicing"/>
    <isoform>
        <id>Q9S7U9-1</id>
        <name>1</name>
        <sequence type="displayed"/>
    </isoform>
    <isoform>
        <id>Q9S7U9-2</id>
        <name>2</name>
        <sequence type="described" ref="VSP_019784"/>
    </isoform>
</comment>
<comment type="PTM">
    <text evidence="4 5 10 11 12">Phosphorylation at Thr-220 and Thr-226 by MAP kinase kinase kinases positively regulates kinase activity. Phosphorylated by MEKK1 in response to cold (PubMed:23857079). Phosphorylated by MAPKKK5 (PubMed:27679653).</text>
</comment>
<comment type="disruption phenotype">
    <text evidence="6 7 8">No obvious developmental defects under normal growth conditions. Simultaneous knockdown of MKK1 and MKK2 results in dwarf and small plants exhibiting a seedling-lethality phenotype.</text>
</comment>
<comment type="miscellaneous">
    <molecule>Isoform 2</molecule>
    <text evidence="13">May be due to intron retention.</text>
</comment>
<comment type="similarity">
    <text evidence="13">Belongs to the protein kinase superfamily. STE Ser/Thr protein kinase family. MAP kinase kinase subfamily.</text>
</comment>
<dbReference type="EC" id="2.7.12.2" evidence="5"/>
<dbReference type="EMBL" id="AB015313">
    <property type="protein sequence ID" value="BAA28828.1"/>
    <property type="molecule type" value="mRNA"/>
</dbReference>
<dbReference type="EMBL" id="AJ006871">
    <property type="protein sequence ID" value="CAA07281.1"/>
    <property type="molecule type" value="mRNA"/>
</dbReference>
<dbReference type="EMBL" id="AF067792">
    <property type="protein sequence ID" value="AAC72754.1"/>
    <property type="molecule type" value="mRNA"/>
</dbReference>
<dbReference type="EMBL" id="AL050352">
    <property type="protein sequence ID" value="CAB43656.1"/>
    <property type="molecule type" value="Genomic_DNA"/>
</dbReference>
<dbReference type="EMBL" id="AL161575">
    <property type="protein sequence ID" value="CAB79739.1"/>
    <property type="molecule type" value="Genomic_DNA"/>
</dbReference>
<dbReference type="EMBL" id="CP002687">
    <property type="protein sequence ID" value="AEE85679.1"/>
    <property type="molecule type" value="Genomic_DNA"/>
</dbReference>
<dbReference type="EMBL" id="CP002687">
    <property type="protein sequence ID" value="AEE85680.1"/>
    <property type="molecule type" value="Genomic_DNA"/>
</dbReference>
<dbReference type="EMBL" id="AF385688">
    <property type="protein sequence ID" value="AAK60281.1"/>
    <property type="molecule type" value="mRNA"/>
</dbReference>
<dbReference type="EMBL" id="AY078009">
    <property type="protein sequence ID" value="AAL77710.1"/>
    <property type="molecule type" value="mRNA"/>
</dbReference>
<dbReference type="PIR" id="T08542">
    <property type="entry name" value="T08542"/>
</dbReference>
<dbReference type="PIR" id="T51735">
    <property type="entry name" value="T51735"/>
</dbReference>
<dbReference type="RefSeq" id="NP_001031751.1">
    <molecule id="Q9S7U9-2"/>
    <property type="nucleotide sequence ID" value="NM_001036674.2"/>
</dbReference>
<dbReference type="RefSeq" id="NP_194710.1">
    <molecule id="Q9S7U9-1"/>
    <property type="nucleotide sequence ID" value="NM_119127.4"/>
</dbReference>
<dbReference type="SMR" id="Q9S7U9"/>
<dbReference type="BioGRID" id="14390">
    <property type="interactions" value="11"/>
</dbReference>
<dbReference type="FunCoup" id="Q9S7U9">
    <property type="interactions" value="4236"/>
</dbReference>
<dbReference type="IntAct" id="Q9S7U9">
    <property type="interactions" value="11"/>
</dbReference>
<dbReference type="STRING" id="3702.Q9S7U9"/>
<dbReference type="iPTMnet" id="Q9S7U9"/>
<dbReference type="MetOSite" id="Q9S7U9"/>
<dbReference type="PaxDb" id="3702-AT4G29810.2"/>
<dbReference type="ProteomicsDB" id="238788">
    <molecule id="Q9S7U9-1"/>
</dbReference>
<dbReference type="EnsemblPlants" id="AT4G29810.1">
    <molecule id="Q9S7U9-1"/>
    <property type="protein sequence ID" value="AT4G29810.1"/>
    <property type="gene ID" value="AT4G29810"/>
</dbReference>
<dbReference type="EnsemblPlants" id="AT4G29810.2">
    <molecule id="Q9S7U9-2"/>
    <property type="protein sequence ID" value="AT4G29810.2"/>
    <property type="gene ID" value="AT4G29810"/>
</dbReference>
<dbReference type="GeneID" id="829103"/>
<dbReference type="Gramene" id="AT4G29810.1">
    <molecule id="Q9S7U9-1"/>
    <property type="protein sequence ID" value="AT4G29810.1"/>
    <property type="gene ID" value="AT4G29810"/>
</dbReference>
<dbReference type="Gramene" id="AT4G29810.2">
    <molecule id="Q9S7U9-2"/>
    <property type="protein sequence ID" value="AT4G29810.2"/>
    <property type="gene ID" value="AT4G29810"/>
</dbReference>
<dbReference type="KEGG" id="ath:AT4G29810"/>
<dbReference type="Araport" id="AT4G29810"/>
<dbReference type="TAIR" id="AT4G29810">
    <property type="gene designation" value="MKK2"/>
</dbReference>
<dbReference type="eggNOG" id="KOG0581">
    <property type="taxonomic scope" value="Eukaryota"/>
</dbReference>
<dbReference type="InParanoid" id="Q9S7U9"/>
<dbReference type="OMA" id="QMTLTEP"/>
<dbReference type="OrthoDB" id="10252354at2759"/>
<dbReference type="PhylomeDB" id="Q9S7U9"/>
<dbReference type="BRENDA" id="2.7.12.2">
    <property type="organism ID" value="399"/>
</dbReference>
<dbReference type="PRO" id="PR:Q9S7U9"/>
<dbReference type="Proteomes" id="UP000006548">
    <property type="component" value="Chromosome 4"/>
</dbReference>
<dbReference type="ExpressionAtlas" id="Q9S7U9">
    <property type="expression patterns" value="baseline and differential"/>
</dbReference>
<dbReference type="GO" id="GO:0005737">
    <property type="term" value="C:cytoplasm"/>
    <property type="evidence" value="ECO:0007005"/>
    <property type="project" value="TAIR"/>
</dbReference>
<dbReference type="GO" id="GO:0005886">
    <property type="term" value="C:plasma membrane"/>
    <property type="evidence" value="ECO:0007005"/>
    <property type="project" value="TAIR"/>
</dbReference>
<dbReference type="GO" id="GO:0005524">
    <property type="term" value="F:ATP binding"/>
    <property type="evidence" value="ECO:0007669"/>
    <property type="project" value="UniProtKB-KW"/>
</dbReference>
<dbReference type="GO" id="GO:0004708">
    <property type="term" value="F:MAP kinase kinase activity"/>
    <property type="evidence" value="ECO:0000314"/>
    <property type="project" value="TAIR"/>
</dbReference>
<dbReference type="GO" id="GO:0106310">
    <property type="term" value="F:protein serine kinase activity"/>
    <property type="evidence" value="ECO:0007669"/>
    <property type="project" value="RHEA"/>
</dbReference>
<dbReference type="GO" id="GO:0004674">
    <property type="term" value="F:protein serine/threonine kinase activity"/>
    <property type="evidence" value="ECO:0007669"/>
    <property type="project" value="UniProtKB-KW"/>
</dbReference>
<dbReference type="GO" id="GO:0004713">
    <property type="term" value="F:protein tyrosine kinase activity"/>
    <property type="evidence" value="ECO:0007669"/>
    <property type="project" value="RHEA"/>
</dbReference>
<dbReference type="GO" id="GO:0060918">
    <property type="term" value="P:auxin transport"/>
    <property type="evidence" value="ECO:0000315"/>
    <property type="project" value="TAIR"/>
</dbReference>
<dbReference type="GO" id="GO:0009631">
    <property type="term" value="P:cold acclimation"/>
    <property type="evidence" value="ECO:0000314"/>
    <property type="project" value="UniProtKB"/>
</dbReference>
<dbReference type="GO" id="GO:0098542">
    <property type="term" value="P:defense response to other organism"/>
    <property type="evidence" value="ECO:0000316"/>
    <property type="project" value="TAIR"/>
</dbReference>
<dbReference type="GO" id="GO:0045087">
    <property type="term" value="P:innate immune response"/>
    <property type="evidence" value="ECO:0007669"/>
    <property type="project" value="UniProtKB-KW"/>
</dbReference>
<dbReference type="GO" id="GO:0009875">
    <property type="term" value="P:pollen-pistil interaction"/>
    <property type="evidence" value="ECO:0000316"/>
    <property type="project" value="TAIR"/>
</dbReference>
<dbReference type="GO" id="GO:0009409">
    <property type="term" value="P:response to cold"/>
    <property type="evidence" value="ECO:0000314"/>
    <property type="project" value="UniProtKB"/>
</dbReference>
<dbReference type="GO" id="GO:0009651">
    <property type="term" value="P:response to salt stress"/>
    <property type="evidence" value="ECO:0000314"/>
    <property type="project" value="TAIR"/>
</dbReference>
<dbReference type="GO" id="GO:0010051">
    <property type="term" value="P:xylem and phloem pattern formation"/>
    <property type="evidence" value="ECO:0000315"/>
    <property type="project" value="TAIR"/>
</dbReference>
<dbReference type="CDD" id="cd06605">
    <property type="entry name" value="PKc_MAPKK"/>
    <property type="match status" value="1"/>
</dbReference>
<dbReference type="FunFam" id="1.10.510.10:FF:000285">
    <property type="entry name" value="Mitogen-activated protein kinase kinase 6"/>
    <property type="match status" value="1"/>
</dbReference>
<dbReference type="FunFam" id="3.30.200.20:FF:000265">
    <property type="entry name" value="Mitogen-activated protein kinase kinase 6"/>
    <property type="match status" value="1"/>
</dbReference>
<dbReference type="Gene3D" id="3.30.200.20">
    <property type="entry name" value="Phosphorylase Kinase, domain 1"/>
    <property type="match status" value="1"/>
</dbReference>
<dbReference type="Gene3D" id="1.10.510.10">
    <property type="entry name" value="Transferase(Phosphotransferase) domain 1"/>
    <property type="match status" value="1"/>
</dbReference>
<dbReference type="InterPro" id="IPR011009">
    <property type="entry name" value="Kinase-like_dom_sf"/>
</dbReference>
<dbReference type="InterPro" id="IPR000719">
    <property type="entry name" value="Prot_kinase_dom"/>
</dbReference>
<dbReference type="InterPro" id="IPR017441">
    <property type="entry name" value="Protein_kinase_ATP_BS"/>
</dbReference>
<dbReference type="InterPro" id="IPR008271">
    <property type="entry name" value="Ser/Thr_kinase_AS"/>
</dbReference>
<dbReference type="PANTHER" id="PTHR48013">
    <property type="entry name" value="DUAL SPECIFICITY MITOGEN-ACTIVATED PROTEIN KINASE KINASE 5-RELATED"/>
    <property type="match status" value="1"/>
</dbReference>
<dbReference type="PANTHER" id="PTHR48013:SF32">
    <property type="entry name" value="MITOGEN-ACTIVATED PROTEIN KINASE KINASE 2-LIKE"/>
    <property type="match status" value="1"/>
</dbReference>
<dbReference type="Pfam" id="PF00069">
    <property type="entry name" value="Pkinase"/>
    <property type="match status" value="1"/>
</dbReference>
<dbReference type="SMART" id="SM00220">
    <property type="entry name" value="S_TKc"/>
    <property type="match status" value="1"/>
</dbReference>
<dbReference type="SUPFAM" id="SSF56112">
    <property type="entry name" value="Protein kinase-like (PK-like)"/>
    <property type="match status" value="1"/>
</dbReference>
<dbReference type="PROSITE" id="PS00107">
    <property type="entry name" value="PROTEIN_KINASE_ATP"/>
    <property type="match status" value="1"/>
</dbReference>
<dbReference type="PROSITE" id="PS50011">
    <property type="entry name" value="PROTEIN_KINASE_DOM"/>
    <property type="match status" value="1"/>
</dbReference>
<dbReference type="PROSITE" id="PS00108">
    <property type="entry name" value="PROTEIN_KINASE_ST"/>
    <property type="match status" value="1"/>
</dbReference>
<name>M2K2_ARATH</name>